<organism>
    <name type="scientific">Salmonella gallinarum (strain 287/91 / NCTC 13346)</name>
    <dbReference type="NCBI Taxonomy" id="550538"/>
    <lineage>
        <taxon>Bacteria</taxon>
        <taxon>Pseudomonadati</taxon>
        <taxon>Pseudomonadota</taxon>
        <taxon>Gammaproteobacteria</taxon>
        <taxon>Enterobacterales</taxon>
        <taxon>Enterobacteriaceae</taxon>
        <taxon>Salmonella</taxon>
    </lineage>
</organism>
<reference key="1">
    <citation type="journal article" date="2008" name="Genome Res.">
        <title>Comparative genome analysis of Salmonella enteritidis PT4 and Salmonella gallinarum 287/91 provides insights into evolutionary and host adaptation pathways.</title>
        <authorList>
            <person name="Thomson N.R."/>
            <person name="Clayton D.J."/>
            <person name="Windhorst D."/>
            <person name="Vernikos G."/>
            <person name="Davidson S."/>
            <person name="Churcher C."/>
            <person name="Quail M.A."/>
            <person name="Stevens M."/>
            <person name="Jones M.A."/>
            <person name="Watson M."/>
            <person name="Barron A."/>
            <person name="Layton A."/>
            <person name="Pickard D."/>
            <person name="Kingsley R.A."/>
            <person name="Bignell A."/>
            <person name="Clark L."/>
            <person name="Harris B."/>
            <person name="Ormond D."/>
            <person name="Abdellah Z."/>
            <person name="Brooks K."/>
            <person name="Cherevach I."/>
            <person name="Chillingworth T."/>
            <person name="Woodward J."/>
            <person name="Norberczak H."/>
            <person name="Lord A."/>
            <person name="Arrowsmith C."/>
            <person name="Jagels K."/>
            <person name="Moule S."/>
            <person name="Mungall K."/>
            <person name="Saunders M."/>
            <person name="Whitehead S."/>
            <person name="Chabalgoity J.A."/>
            <person name="Maskell D."/>
            <person name="Humphreys T."/>
            <person name="Roberts M."/>
            <person name="Barrow P.A."/>
            <person name="Dougan G."/>
            <person name="Parkhill J."/>
        </authorList>
    </citation>
    <scope>NUCLEOTIDE SEQUENCE [LARGE SCALE GENOMIC DNA]</scope>
    <source>
        <strain>287/91 / NCTC 13346</strain>
    </source>
</reference>
<proteinExistence type="inferred from homology"/>
<protein>
    <recommendedName>
        <fullName evidence="1">HTH-type transcriptional repressor NsrR</fullName>
    </recommendedName>
</protein>
<sequence length="141" mass="15608">MQLTSFTDYGLRALIYMASLPDGRMTSISEVTEVYGVSRNHMVKIINQLSRAGFVTAVRGKNGGIRLGKPANTICIGDVVRELEPLSLVNCSSEFCHITPACRLKQALSKAVQSFLKELDNYTLADLVEENQPLYKLLLVE</sequence>
<name>NSRR_SALG2</name>
<evidence type="ECO:0000255" key="1">
    <source>
        <dbReference type="HAMAP-Rule" id="MF_01177"/>
    </source>
</evidence>
<keyword id="KW-0001">2Fe-2S</keyword>
<keyword id="KW-0238">DNA-binding</keyword>
<keyword id="KW-0408">Iron</keyword>
<keyword id="KW-0411">Iron-sulfur</keyword>
<keyword id="KW-0479">Metal-binding</keyword>
<keyword id="KW-0678">Repressor</keyword>
<keyword id="KW-0804">Transcription</keyword>
<keyword id="KW-0805">Transcription regulation</keyword>
<gene>
    <name evidence="1" type="primary">nsrR</name>
    <name type="ordered locus">SG4207</name>
</gene>
<accession>B5R9C4</accession>
<comment type="function">
    <text evidence="1">Nitric oxide-sensitive repressor of genes involved in protecting the cell against nitrosative stress. May require iron for activity.</text>
</comment>
<comment type="cofactor">
    <cofactor evidence="1">
        <name>[2Fe-2S] cluster</name>
        <dbReference type="ChEBI" id="CHEBI:190135"/>
    </cofactor>
    <text evidence="1">Binds 1 [2Fe-2S] cluster per subunit.</text>
</comment>
<feature type="chain" id="PRO_1000138128" description="HTH-type transcriptional repressor NsrR">
    <location>
        <begin position="1"/>
        <end position="141"/>
    </location>
</feature>
<feature type="domain" description="HTH rrf2-type" evidence="1">
    <location>
        <begin position="2"/>
        <end position="129"/>
    </location>
</feature>
<feature type="DNA-binding region" description="H-T-H motif" evidence="1">
    <location>
        <begin position="28"/>
        <end position="51"/>
    </location>
</feature>
<feature type="binding site" evidence="1">
    <location>
        <position position="91"/>
    </location>
    <ligand>
        <name>[2Fe-2S] cluster</name>
        <dbReference type="ChEBI" id="CHEBI:190135"/>
    </ligand>
</feature>
<feature type="binding site" evidence="1">
    <location>
        <position position="96"/>
    </location>
    <ligand>
        <name>[2Fe-2S] cluster</name>
        <dbReference type="ChEBI" id="CHEBI:190135"/>
    </ligand>
</feature>
<feature type="binding site" evidence="1">
    <location>
        <position position="102"/>
    </location>
    <ligand>
        <name>[2Fe-2S] cluster</name>
        <dbReference type="ChEBI" id="CHEBI:190135"/>
    </ligand>
</feature>
<dbReference type="EMBL" id="AM933173">
    <property type="protein sequence ID" value="CAR39972.1"/>
    <property type="molecule type" value="Genomic_DNA"/>
</dbReference>
<dbReference type="RefSeq" id="WP_001177632.1">
    <property type="nucleotide sequence ID" value="NC_011274.1"/>
</dbReference>
<dbReference type="SMR" id="B5R9C4"/>
<dbReference type="KEGG" id="seg:SG4207"/>
<dbReference type="HOGENOM" id="CLU_107144_2_1_6"/>
<dbReference type="Proteomes" id="UP000008321">
    <property type="component" value="Chromosome"/>
</dbReference>
<dbReference type="GO" id="GO:0005829">
    <property type="term" value="C:cytosol"/>
    <property type="evidence" value="ECO:0007669"/>
    <property type="project" value="TreeGrafter"/>
</dbReference>
<dbReference type="GO" id="GO:0051537">
    <property type="term" value="F:2 iron, 2 sulfur cluster binding"/>
    <property type="evidence" value="ECO:0007669"/>
    <property type="project" value="UniProtKB-KW"/>
</dbReference>
<dbReference type="GO" id="GO:0003700">
    <property type="term" value="F:DNA-binding transcription factor activity"/>
    <property type="evidence" value="ECO:0007669"/>
    <property type="project" value="UniProtKB-UniRule"/>
</dbReference>
<dbReference type="GO" id="GO:0003690">
    <property type="term" value="F:double-stranded DNA binding"/>
    <property type="evidence" value="ECO:0007669"/>
    <property type="project" value="UniProtKB-UniRule"/>
</dbReference>
<dbReference type="GO" id="GO:0005506">
    <property type="term" value="F:iron ion binding"/>
    <property type="evidence" value="ECO:0007669"/>
    <property type="project" value="UniProtKB-UniRule"/>
</dbReference>
<dbReference type="GO" id="GO:0045892">
    <property type="term" value="P:negative regulation of DNA-templated transcription"/>
    <property type="evidence" value="ECO:0007669"/>
    <property type="project" value="InterPro"/>
</dbReference>
<dbReference type="FunFam" id="1.10.10.10:FF:000105">
    <property type="entry name" value="HTH-type transcriptional repressor NsrR"/>
    <property type="match status" value="1"/>
</dbReference>
<dbReference type="Gene3D" id="1.10.10.10">
    <property type="entry name" value="Winged helix-like DNA-binding domain superfamily/Winged helix DNA-binding domain"/>
    <property type="match status" value="1"/>
</dbReference>
<dbReference type="HAMAP" id="MF_01177">
    <property type="entry name" value="HTH_type_NsrR"/>
    <property type="match status" value="1"/>
</dbReference>
<dbReference type="InterPro" id="IPR000944">
    <property type="entry name" value="Tscrpt_reg_Rrf2"/>
</dbReference>
<dbReference type="InterPro" id="IPR023761">
    <property type="entry name" value="Tscrpt_rep_HTH_NsrR"/>
</dbReference>
<dbReference type="InterPro" id="IPR036388">
    <property type="entry name" value="WH-like_DNA-bd_sf"/>
</dbReference>
<dbReference type="InterPro" id="IPR036390">
    <property type="entry name" value="WH_DNA-bd_sf"/>
</dbReference>
<dbReference type="NCBIfam" id="NF008240">
    <property type="entry name" value="PRK11014.1"/>
    <property type="match status" value="1"/>
</dbReference>
<dbReference type="NCBIfam" id="TIGR00738">
    <property type="entry name" value="rrf2_super"/>
    <property type="match status" value="1"/>
</dbReference>
<dbReference type="PANTHER" id="PTHR33221:SF4">
    <property type="entry name" value="HTH-TYPE TRANSCRIPTIONAL REPRESSOR NSRR"/>
    <property type="match status" value="1"/>
</dbReference>
<dbReference type="PANTHER" id="PTHR33221">
    <property type="entry name" value="WINGED HELIX-TURN-HELIX TRANSCRIPTIONAL REGULATOR, RRF2 FAMILY"/>
    <property type="match status" value="1"/>
</dbReference>
<dbReference type="Pfam" id="PF02082">
    <property type="entry name" value="Rrf2"/>
    <property type="match status" value="1"/>
</dbReference>
<dbReference type="SUPFAM" id="SSF46785">
    <property type="entry name" value="Winged helix' DNA-binding domain"/>
    <property type="match status" value="1"/>
</dbReference>
<dbReference type="PROSITE" id="PS51197">
    <property type="entry name" value="HTH_RRF2_2"/>
    <property type="match status" value="1"/>
</dbReference>